<geneLocation type="plastid"/>
<feature type="initiator methionine" description="Removed" evidence="1">
    <location>
        <position position="1"/>
    </location>
</feature>
<feature type="chain" id="PRO_0000339984" description="Photosystem II protein D1" evidence="1">
    <location>
        <begin position="2"/>
        <end position="344"/>
    </location>
</feature>
<feature type="propeptide" id="PRO_0000431678" evidence="1">
    <location>
        <begin position="345"/>
        <end position="353"/>
    </location>
</feature>
<feature type="transmembrane region" description="Helical" evidence="1">
    <location>
        <begin position="29"/>
        <end position="46"/>
    </location>
</feature>
<feature type="transmembrane region" description="Helical" evidence="1">
    <location>
        <begin position="118"/>
        <end position="133"/>
    </location>
</feature>
<feature type="transmembrane region" description="Helical" evidence="1">
    <location>
        <begin position="142"/>
        <end position="156"/>
    </location>
</feature>
<feature type="transmembrane region" description="Helical" evidence="1">
    <location>
        <begin position="197"/>
        <end position="218"/>
    </location>
</feature>
<feature type="transmembrane region" description="Helical" evidence="1">
    <location>
        <begin position="274"/>
        <end position="288"/>
    </location>
</feature>
<feature type="binding site" description="axial binding residue" evidence="1">
    <location>
        <position position="118"/>
    </location>
    <ligand>
        <name>chlorophyll a</name>
        <dbReference type="ChEBI" id="CHEBI:58416"/>
        <label>ChlzD1</label>
    </ligand>
    <ligandPart>
        <name>Mg</name>
        <dbReference type="ChEBI" id="CHEBI:25107"/>
    </ligandPart>
</feature>
<feature type="binding site" evidence="1">
    <location>
        <position position="126"/>
    </location>
    <ligand>
        <name>pheophytin a</name>
        <dbReference type="ChEBI" id="CHEBI:136840"/>
        <label>D1</label>
    </ligand>
</feature>
<feature type="binding site" evidence="1">
    <location>
        <position position="170"/>
    </location>
    <ligand>
        <name>[CaMn4O5] cluster</name>
        <dbReference type="ChEBI" id="CHEBI:189552"/>
    </ligand>
</feature>
<feature type="binding site" evidence="1">
    <location>
        <position position="189"/>
    </location>
    <ligand>
        <name>[CaMn4O5] cluster</name>
        <dbReference type="ChEBI" id="CHEBI:189552"/>
    </ligand>
</feature>
<feature type="binding site" description="axial binding residue" evidence="1">
    <location>
        <position position="198"/>
    </location>
    <ligand>
        <name>chlorophyll a</name>
        <dbReference type="ChEBI" id="CHEBI:58416"/>
        <label>PD1</label>
    </ligand>
    <ligandPart>
        <name>Mg</name>
        <dbReference type="ChEBI" id="CHEBI:25107"/>
    </ligandPart>
</feature>
<feature type="binding site" evidence="1">
    <location>
        <position position="215"/>
    </location>
    <ligand>
        <name>a quinone</name>
        <dbReference type="ChEBI" id="CHEBI:132124"/>
        <label>B</label>
    </ligand>
</feature>
<feature type="binding site" evidence="1">
    <location>
        <position position="215"/>
    </location>
    <ligand>
        <name>Fe cation</name>
        <dbReference type="ChEBI" id="CHEBI:24875"/>
        <note>ligand shared with heterodimeric partner</note>
    </ligand>
</feature>
<feature type="binding site" evidence="1">
    <location>
        <begin position="264"/>
        <end position="265"/>
    </location>
    <ligand>
        <name>a quinone</name>
        <dbReference type="ChEBI" id="CHEBI:132124"/>
        <label>B</label>
    </ligand>
</feature>
<feature type="binding site" evidence="1">
    <location>
        <position position="272"/>
    </location>
    <ligand>
        <name>Fe cation</name>
        <dbReference type="ChEBI" id="CHEBI:24875"/>
        <note>ligand shared with heterodimeric partner</note>
    </ligand>
</feature>
<feature type="binding site" evidence="1">
    <location>
        <position position="332"/>
    </location>
    <ligand>
        <name>[CaMn4O5] cluster</name>
        <dbReference type="ChEBI" id="CHEBI:189552"/>
    </ligand>
</feature>
<feature type="binding site" evidence="1">
    <location>
        <position position="333"/>
    </location>
    <ligand>
        <name>[CaMn4O5] cluster</name>
        <dbReference type="ChEBI" id="CHEBI:189552"/>
    </ligand>
</feature>
<feature type="binding site" evidence="1">
    <location>
        <position position="342"/>
    </location>
    <ligand>
        <name>[CaMn4O5] cluster</name>
        <dbReference type="ChEBI" id="CHEBI:189552"/>
    </ligand>
</feature>
<feature type="binding site" evidence="1">
    <location>
        <position position="344"/>
    </location>
    <ligand>
        <name>[CaMn4O5] cluster</name>
        <dbReference type="ChEBI" id="CHEBI:189552"/>
    </ligand>
</feature>
<feature type="site" description="Tyrosine radical intermediate" evidence="1">
    <location>
        <position position="161"/>
    </location>
</feature>
<feature type="site" description="Stabilizes free radical intermediate" evidence="1">
    <location>
        <position position="190"/>
    </location>
</feature>
<feature type="site" description="Cleavage; by CTPA" evidence="1">
    <location>
        <begin position="344"/>
        <end position="345"/>
    </location>
</feature>
<feature type="modified residue" description="N-acetylthreonine" evidence="1">
    <location>
        <position position="2"/>
    </location>
</feature>
<feature type="modified residue" description="Phosphothreonine" evidence="1">
    <location>
        <position position="2"/>
    </location>
</feature>
<proteinExistence type="inferred from homology"/>
<gene>
    <name evidence="1" type="primary">psbA</name>
</gene>
<comment type="function">
    <text evidence="1">Photosystem II (PSII) is a light-driven water:plastoquinone oxidoreductase that uses light energy to abstract electrons from H(2)O, generating O(2) and a proton gradient subsequently used for ATP formation. It consists of a core antenna complex that captures photons, and an electron transfer chain that converts photonic excitation into a charge separation. The D1/D2 (PsbA/PsbD) reaction center heterodimer binds P680, the primary electron donor of PSII as well as several subsequent electron acceptors.</text>
</comment>
<comment type="catalytic activity">
    <reaction evidence="1">
        <text>2 a plastoquinone + 4 hnu + 2 H2O = 2 a plastoquinol + O2</text>
        <dbReference type="Rhea" id="RHEA:36359"/>
        <dbReference type="Rhea" id="RHEA-COMP:9561"/>
        <dbReference type="Rhea" id="RHEA-COMP:9562"/>
        <dbReference type="ChEBI" id="CHEBI:15377"/>
        <dbReference type="ChEBI" id="CHEBI:15379"/>
        <dbReference type="ChEBI" id="CHEBI:17757"/>
        <dbReference type="ChEBI" id="CHEBI:30212"/>
        <dbReference type="ChEBI" id="CHEBI:62192"/>
        <dbReference type="EC" id="1.10.3.9"/>
    </reaction>
</comment>
<comment type="cofactor">
    <text evidence="1">The D1/D2 heterodimer binds P680, chlorophylls that are the primary electron donor of PSII, and subsequent electron acceptors. It shares a non-heme iron and each subunit binds pheophytin, quinone, additional chlorophylls, carotenoids and lipids. D1 provides most of the ligands for the Mn4-Ca-O5 cluster of the oxygen-evolving complex (OEC). There is also a Cl(-1) ion associated with D1 and D2, which is required for oxygen evolution. The PSII complex binds additional chlorophylls, carotenoids and specific lipids.</text>
</comment>
<comment type="subunit">
    <text evidence="1">PSII is composed of 1 copy each of membrane proteins PsbA, PsbB, PsbC, PsbD, PsbE, PsbF, PsbH, PsbI, PsbJ, PsbK, PsbL, PsbM, PsbT, PsbX, PsbY, PsbZ, Psb30/Ycf12, at least 3 peripheral proteins of the oxygen-evolving complex and a large number of cofactors. It forms dimeric complexes.</text>
</comment>
<comment type="subcellular location">
    <subcellularLocation>
        <location evidence="2">Plastid membrane</location>
        <topology evidence="1">Multi-pass membrane protein</topology>
    </subcellularLocation>
</comment>
<comment type="PTM">
    <text evidence="1">Tyr-161 forms a radical intermediate that is referred to as redox-active TyrZ, YZ or Y-Z.</text>
</comment>
<comment type="PTM">
    <text evidence="1">C-terminally processed by CTPA; processing is essential to allow assembly of the oxygen-evolving complex and thus photosynthetic growth.</text>
</comment>
<comment type="miscellaneous">
    <text evidence="1">2 of the reaction center chlorophylls (ChlD1 and ChlD2) are entirely coordinated by water.</text>
</comment>
<comment type="miscellaneous">
    <text evidence="1">Herbicides such as atrazine, BNT, diuron or ioxynil bind in the Q(B) binding site and block subsequent electron transfer.</text>
</comment>
<comment type="similarity">
    <text evidence="1">Belongs to the reaction center PufL/M/PsbA/D family.</text>
</comment>
<comment type="caution">
    <text evidence="2">Only inflorescences, fruits, starved seedlings and stressed stem tips are green in this organism.</text>
</comment>
<organism>
    <name type="scientific">Cuscuta obtusiflora</name>
    <name type="common">Peruvian dodder</name>
    <dbReference type="NCBI Taxonomy" id="437280"/>
    <lineage>
        <taxon>Eukaryota</taxon>
        <taxon>Viridiplantae</taxon>
        <taxon>Streptophyta</taxon>
        <taxon>Embryophyta</taxon>
        <taxon>Tracheophyta</taxon>
        <taxon>Spermatophyta</taxon>
        <taxon>Magnoliopsida</taxon>
        <taxon>eudicotyledons</taxon>
        <taxon>Gunneridae</taxon>
        <taxon>Pentapetalae</taxon>
        <taxon>asterids</taxon>
        <taxon>lamiids</taxon>
        <taxon>Solanales</taxon>
        <taxon>Convolvulaceae</taxon>
        <taxon>Cuscuteae</taxon>
        <taxon>Cuscuta</taxon>
        <taxon>Cuscuta subgen. Grammica</taxon>
        <taxon>Cuscuta sect. Cleistogrammica</taxon>
    </lineage>
</organism>
<dbReference type="EC" id="1.10.3.9" evidence="1"/>
<dbReference type="EMBL" id="EU189133">
    <property type="protein sequence ID" value="ABW20547.1"/>
    <property type="molecule type" value="Genomic_DNA"/>
</dbReference>
<dbReference type="RefSeq" id="YP_001531202.1">
    <property type="nucleotide sequence ID" value="NC_009949.1"/>
</dbReference>
<dbReference type="SMR" id="A8W3H2"/>
<dbReference type="GeneID" id="5714836"/>
<dbReference type="GO" id="GO:0009535">
    <property type="term" value="C:chloroplast thylakoid membrane"/>
    <property type="evidence" value="ECO:0007669"/>
    <property type="project" value="TreeGrafter"/>
</dbReference>
<dbReference type="GO" id="GO:0009523">
    <property type="term" value="C:photosystem II"/>
    <property type="evidence" value="ECO:0007669"/>
    <property type="project" value="UniProtKB-KW"/>
</dbReference>
<dbReference type="GO" id="GO:0016168">
    <property type="term" value="F:chlorophyll binding"/>
    <property type="evidence" value="ECO:0007669"/>
    <property type="project" value="UniProtKB-UniRule"/>
</dbReference>
<dbReference type="GO" id="GO:0045156">
    <property type="term" value="F:electron transporter, transferring electrons within the cyclic electron transport pathway of photosynthesis activity"/>
    <property type="evidence" value="ECO:0007669"/>
    <property type="project" value="InterPro"/>
</dbReference>
<dbReference type="GO" id="GO:0005506">
    <property type="term" value="F:iron ion binding"/>
    <property type="evidence" value="ECO:0007669"/>
    <property type="project" value="UniProtKB-UniRule"/>
</dbReference>
<dbReference type="GO" id="GO:0016682">
    <property type="term" value="F:oxidoreductase activity, acting on diphenols and related substances as donors, oxygen as acceptor"/>
    <property type="evidence" value="ECO:0007669"/>
    <property type="project" value="UniProtKB-UniRule"/>
</dbReference>
<dbReference type="GO" id="GO:0010242">
    <property type="term" value="F:oxygen evolving activity"/>
    <property type="evidence" value="ECO:0007669"/>
    <property type="project" value="UniProtKB-EC"/>
</dbReference>
<dbReference type="GO" id="GO:0009772">
    <property type="term" value="P:photosynthetic electron transport in photosystem II"/>
    <property type="evidence" value="ECO:0007669"/>
    <property type="project" value="InterPro"/>
</dbReference>
<dbReference type="GO" id="GO:0009635">
    <property type="term" value="P:response to herbicide"/>
    <property type="evidence" value="ECO:0007669"/>
    <property type="project" value="UniProtKB-KW"/>
</dbReference>
<dbReference type="CDD" id="cd09289">
    <property type="entry name" value="Photosystem-II_D1"/>
    <property type="match status" value="1"/>
</dbReference>
<dbReference type="FunFam" id="1.20.85.10:FF:000002">
    <property type="entry name" value="Photosystem II protein D1"/>
    <property type="match status" value="1"/>
</dbReference>
<dbReference type="Gene3D" id="1.20.85.10">
    <property type="entry name" value="Photosystem II protein D1-like"/>
    <property type="match status" value="1"/>
</dbReference>
<dbReference type="HAMAP" id="MF_01379">
    <property type="entry name" value="PSII_PsbA_D1"/>
    <property type="match status" value="1"/>
</dbReference>
<dbReference type="InterPro" id="IPR055266">
    <property type="entry name" value="D1/D2"/>
</dbReference>
<dbReference type="InterPro" id="IPR036854">
    <property type="entry name" value="Photo_II_D1/D2_sf"/>
</dbReference>
<dbReference type="InterPro" id="IPR000484">
    <property type="entry name" value="Photo_RC_L/M"/>
</dbReference>
<dbReference type="InterPro" id="IPR055265">
    <property type="entry name" value="Photo_RC_L/M_CS"/>
</dbReference>
<dbReference type="InterPro" id="IPR005867">
    <property type="entry name" value="PSII_D1"/>
</dbReference>
<dbReference type="NCBIfam" id="TIGR01151">
    <property type="entry name" value="psbA"/>
    <property type="match status" value="1"/>
</dbReference>
<dbReference type="PANTHER" id="PTHR33149:SF12">
    <property type="entry name" value="PHOTOSYSTEM II D2 PROTEIN"/>
    <property type="match status" value="1"/>
</dbReference>
<dbReference type="PANTHER" id="PTHR33149">
    <property type="entry name" value="PHOTOSYSTEM II PROTEIN D1"/>
    <property type="match status" value="1"/>
</dbReference>
<dbReference type="Pfam" id="PF00124">
    <property type="entry name" value="Photo_RC"/>
    <property type="match status" value="1"/>
</dbReference>
<dbReference type="PRINTS" id="PR00256">
    <property type="entry name" value="REACTNCENTRE"/>
</dbReference>
<dbReference type="SUPFAM" id="SSF81483">
    <property type="entry name" value="Bacterial photosystem II reaction centre, L and M subunits"/>
    <property type="match status" value="1"/>
</dbReference>
<dbReference type="PROSITE" id="PS00244">
    <property type="entry name" value="REACTION_CENTER"/>
    <property type="match status" value="1"/>
</dbReference>
<protein>
    <recommendedName>
        <fullName evidence="1">Photosystem II protein D1</fullName>
        <shortName evidence="1">PSII D1 protein</shortName>
        <ecNumber evidence="1">1.10.3.9</ecNumber>
    </recommendedName>
    <alternativeName>
        <fullName evidence="1">Photosystem II Q(B) protein</fullName>
    </alternativeName>
</protein>
<evidence type="ECO:0000255" key="1">
    <source>
        <dbReference type="HAMAP-Rule" id="MF_01379"/>
    </source>
</evidence>
<evidence type="ECO:0000305" key="2"/>
<sequence>MTVVLDRRKSENLWGRFCNWITSTENRLYIGWFGVLMIPTLLTATSVFLIAFIAAPPVDIDGIREPVSGSLLYGNNIISGAIIPTSAAIGLHFYPIWEAASIAEWLYNGGPYELIVLHFLLGVACYMGREWELSFRLGMRPWIAIAYSAPVAAATAVFLIYPIGQGSFSDGMPLGISGTFNFMIVFQAEHNILMHPFHMLGVAGVFGGSLFSAMHGSLVTSSLIRETTESESANKGYKFGQEEETYNIVAAHGYFGRLIFQYASFNNSRSLHFFLAAWPVIGIWFTALGISTMAFNLNGFNFNQSVVDSKGHVINTWADIINRANLGMEVMHERNAHNFPLDLATFEVSATNA</sequence>
<keyword id="KW-0007">Acetylation</keyword>
<keyword id="KW-0106">Calcium</keyword>
<keyword id="KW-0148">Chlorophyll</keyword>
<keyword id="KW-0157">Chromophore</keyword>
<keyword id="KW-0249">Electron transport</keyword>
<keyword id="KW-0359">Herbicide resistance</keyword>
<keyword id="KW-0408">Iron</keyword>
<keyword id="KW-0460">Magnesium</keyword>
<keyword id="KW-0464">Manganese</keyword>
<keyword id="KW-0472">Membrane</keyword>
<keyword id="KW-0479">Metal-binding</keyword>
<keyword id="KW-0560">Oxidoreductase</keyword>
<keyword id="KW-0597">Phosphoprotein</keyword>
<keyword id="KW-0602">Photosynthesis</keyword>
<keyword id="KW-0604">Photosystem II</keyword>
<keyword id="KW-0934">Plastid</keyword>
<keyword id="KW-0812">Transmembrane</keyword>
<keyword id="KW-1133">Transmembrane helix</keyword>
<keyword id="KW-0813">Transport</keyword>
<reference key="1">
    <citation type="journal article" date="2007" name="BMC Plant Biol.">
        <title>Complete plastid genome sequences suggest strong selection for retention of photosynthetic genes in the parasitic plant genus Cuscuta.</title>
        <authorList>
            <person name="McNeal J.R."/>
            <person name="Kuehl J.V."/>
            <person name="Boore J.L."/>
            <person name="dePamphilis C.W."/>
        </authorList>
    </citation>
    <scope>NUCLEOTIDE SEQUENCE [LARGE SCALE GENOMIC DNA]</scope>
</reference>
<name>PSBA_CUSOB</name>
<accession>A8W3H2</accession>